<keyword id="KW-0012">Acyltransferase</keyword>
<keyword id="KW-0441">Lipid A biosynthesis</keyword>
<keyword id="KW-0444">Lipid biosynthesis</keyword>
<keyword id="KW-0443">Lipid metabolism</keyword>
<keyword id="KW-1185">Reference proteome</keyword>
<keyword id="KW-0677">Repeat</keyword>
<keyword id="KW-0808">Transferase</keyword>
<feature type="chain" id="PRO_0000264428" description="UDP-3-O-acylglucosamine N-acyltransferase">
    <location>
        <begin position="1"/>
        <end position="359"/>
    </location>
</feature>
<feature type="active site" description="Proton acceptor" evidence="1">
    <location>
        <position position="256"/>
    </location>
</feature>
<evidence type="ECO:0000255" key="1">
    <source>
        <dbReference type="HAMAP-Rule" id="MF_00523"/>
    </source>
</evidence>
<accession>Q2IW89</accession>
<name>LPXD_RHOP2</name>
<sequence>MTSTLFFKPRPSSTLAEIAALTKAELVDPSQGDRVISGIASLDEAGPMHLGFFENIKYVAELEQTHAGACLVTQRYETRVPPHVAVLRVKSPVQAFVAYARHIHEDAMRPMSGFGGTGIAPSAVIHPSARLEDGVIVDPLAVIGPDVEIGAGSVIGAGAVIASGVKIGRDCNVGANTTIQFSLIGNNVLIHPGCHIGQDGFRFIFARTHQKVPQVGRVIIQNDVEIGSGTTVDRGGLRDTVIGEGTKIDNQVQVGHNVTIGRHCVIAAQCGLAGSLTLGDNVALGAKVGINNHVMIGDGAQITAMSAVKDSVPAGERWGGYFAKPTKQWFREIIAVERLMRGGAGAAPKADDGKDEDRG</sequence>
<proteinExistence type="inferred from homology"/>
<gene>
    <name evidence="1" type="primary">lpxD</name>
    <name type="ordered locus">RPB_2819</name>
</gene>
<reference key="1">
    <citation type="submission" date="2006-01" db="EMBL/GenBank/DDBJ databases">
        <title>Complete sequence of Rhodopseudomonas palustris HaA2.</title>
        <authorList>
            <consortium name="US DOE Joint Genome Institute"/>
            <person name="Copeland A."/>
            <person name="Lucas S."/>
            <person name="Lapidus A."/>
            <person name="Barry K."/>
            <person name="Detter J.C."/>
            <person name="Glavina T."/>
            <person name="Hammon N."/>
            <person name="Israni S."/>
            <person name="Pitluck S."/>
            <person name="Chain P."/>
            <person name="Malfatti S."/>
            <person name="Shin M."/>
            <person name="Vergez L."/>
            <person name="Schmutz J."/>
            <person name="Larimer F."/>
            <person name="Land M."/>
            <person name="Hauser L."/>
            <person name="Pelletier D.A."/>
            <person name="Kyrpides N."/>
            <person name="Anderson I."/>
            <person name="Oda Y."/>
            <person name="Harwood C.S."/>
            <person name="Richardson P."/>
        </authorList>
    </citation>
    <scope>NUCLEOTIDE SEQUENCE [LARGE SCALE GENOMIC DNA]</scope>
    <source>
        <strain>HaA2</strain>
    </source>
</reference>
<protein>
    <recommendedName>
        <fullName evidence="1">UDP-3-O-acylglucosamine N-acyltransferase</fullName>
        <ecNumber evidence="1">2.3.1.191</ecNumber>
    </recommendedName>
</protein>
<dbReference type="EC" id="2.3.1.191" evidence="1"/>
<dbReference type="EMBL" id="CP000250">
    <property type="protein sequence ID" value="ABD07521.1"/>
    <property type="molecule type" value="Genomic_DNA"/>
</dbReference>
<dbReference type="RefSeq" id="WP_011441706.1">
    <property type="nucleotide sequence ID" value="NC_007778.1"/>
</dbReference>
<dbReference type="SMR" id="Q2IW89"/>
<dbReference type="STRING" id="316058.RPB_2819"/>
<dbReference type="KEGG" id="rpb:RPB_2819"/>
<dbReference type="eggNOG" id="COG1044">
    <property type="taxonomic scope" value="Bacteria"/>
</dbReference>
<dbReference type="HOGENOM" id="CLU_049865_0_2_5"/>
<dbReference type="OrthoDB" id="9784739at2"/>
<dbReference type="UniPathway" id="UPA00973"/>
<dbReference type="Proteomes" id="UP000008809">
    <property type="component" value="Chromosome"/>
</dbReference>
<dbReference type="GO" id="GO:0016020">
    <property type="term" value="C:membrane"/>
    <property type="evidence" value="ECO:0007669"/>
    <property type="project" value="GOC"/>
</dbReference>
<dbReference type="GO" id="GO:0016410">
    <property type="term" value="F:N-acyltransferase activity"/>
    <property type="evidence" value="ECO:0007669"/>
    <property type="project" value="InterPro"/>
</dbReference>
<dbReference type="GO" id="GO:0009245">
    <property type="term" value="P:lipid A biosynthetic process"/>
    <property type="evidence" value="ECO:0007669"/>
    <property type="project" value="UniProtKB-UniRule"/>
</dbReference>
<dbReference type="CDD" id="cd03352">
    <property type="entry name" value="LbH_LpxD"/>
    <property type="match status" value="1"/>
</dbReference>
<dbReference type="Gene3D" id="2.160.10.10">
    <property type="entry name" value="Hexapeptide repeat proteins"/>
    <property type="match status" value="1"/>
</dbReference>
<dbReference type="Gene3D" id="3.40.1390.10">
    <property type="entry name" value="MurE/MurF, N-terminal domain"/>
    <property type="match status" value="1"/>
</dbReference>
<dbReference type="HAMAP" id="MF_00523">
    <property type="entry name" value="LpxD"/>
    <property type="match status" value="1"/>
</dbReference>
<dbReference type="InterPro" id="IPR001451">
    <property type="entry name" value="Hexapep"/>
</dbReference>
<dbReference type="InterPro" id="IPR018357">
    <property type="entry name" value="Hexapep_transf_CS"/>
</dbReference>
<dbReference type="InterPro" id="IPR007691">
    <property type="entry name" value="LpxD"/>
</dbReference>
<dbReference type="InterPro" id="IPR011004">
    <property type="entry name" value="Trimer_LpxA-like_sf"/>
</dbReference>
<dbReference type="InterPro" id="IPR020573">
    <property type="entry name" value="UDP_GlcNAc_AcTrfase_non-rep"/>
</dbReference>
<dbReference type="NCBIfam" id="TIGR01853">
    <property type="entry name" value="lipid_A_lpxD"/>
    <property type="match status" value="1"/>
</dbReference>
<dbReference type="NCBIfam" id="NF002060">
    <property type="entry name" value="PRK00892.1"/>
    <property type="match status" value="1"/>
</dbReference>
<dbReference type="PANTHER" id="PTHR43378">
    <property type="entry name" value="UDP-3-O-ACYLGLUCOSAMINE N-ACYLTRANSFERASE"/>
    <property type="match status" value="1"/>
</dbReference>
<dbReference type="PANTHER" id="PTHR43378:SF2">
    <property type="entry name" value="UDP-3-O-ACYLGLUCOSAMINE N-ACYLTRANSFERASE 1, MITOCHONDRIAL-RELATED"/>
    <property type="match status" value="1"/>
</dbReference>
<dbReference type="Pfam" id="PF00132">
    <property type="entry name" value="Hexapep"/>
    <property type="match status" value="2"/>
</dbReference>
<dbReference type="Pfam" id="PF04613">
    <property type="entry name" value="LpxD"/>
    <property type="match status" value="1"/>
</dbReference>
<dbReference type="SUPFAM" id="SSF51161">
    <property type="entry name" value="Trimeric LpxA-like enzymes"/>
    <property type="match status" value="1"/>
</dbReference>
<dbReference type="PROSITE" id="PS00101">
    <property type="entry name" value="HEXAPEP_TRANSFERASES"/>
    <property type="match status" value="2"/>
</dbReference>
<comment type="function">
    <text evidence="1">Catalyzes the N-acylation of UDP-3-O-acylglucosamine using 3-hydroxyacyl-ACP as the acyl donor. Is involved in the biosynthesis of lipid A, a phosphorylated glycolipid that anchors the lipopolysaccharide to the outer membrane of the cell.</text>
</comment>
<comment type="catalytic activity">
    <reaction evidence="1">
        <text>a UDP-3-O-[(3R)-3-hydroxyacyl]-alpha-D-glucosamine + a (3R)-hydroxyacyl-[ACP] = a UDP-2-N,3-O-bis[(3R)-3-hydroxyacyl]-alpha-D-glucosamine + holo-[ACP] + H(+)</text>
        <dbReference type="Rhea" id="RHEA:53836"/>
        <dbReference type="Rhea" id="RHEA-COMP:9685"/>
        <dbReference type="Rhea" id="RHEA-COMP:9945"/>
        <dbReference type="ChEBI" id="CHEBI:15378"/>
        <dbReference type="ChEBI" id="CHEBI:64479"/>
        <dbReference type="ChEBI" id="CHEBI:78827"/>
        <dbReference type="ChEBI" id="CHEBI:137740"/>
        <dbReference type="ChEBI" id="CHEBI:137748"/>
        <dbReference type="EC" id="2.3.1.191"/>
    </reaction>
</comment>
<comment type="pathway">
    <text evidence="1">Bacterial outer membrane biogenesis; LPS lipid A biosynthesis.</text>
</comment>
<comment type="subunit">
    <text evidence="1">Homotrimer.</text>
</comment>
<comment type="similarity">
    <text evidence="1">Belongs to the transferase hexapeptide repeat family. LpxD subfamily.</text>
</comment>
<organism>
    <name type="scientific">Rhodopseudomonas palustris (strain HaA2)</name>
    <dbReference type="NCBI Taxonomy" id="316058"/>
    <lineage>
        <taxon>Bacteria</taxon>
        <taxon>Pseudomonadati</taxon>
        <taxon>Pseudomonadota</taxon>
        <taxon>Alphaproteobacteria</taxon>
        <taxon>Hyphomicrobiales</taxon>
        <taxon>Nitrobacteraceae</taxon>
        <taxon>Rhodopseudomonas</taxon>
    </lineage>
</organism>